<protein>
    <recommendedName>
        <fullName>Exochitinase 1</fullName>
        <ecNumber>3.2.1.14</ecNumber>
    </recommendedName>
</protein>
<feature type="signal peptide" description="Or 32" evidence="1">
    <location>
        <begin position="1"/>
        <end position="29"/>
    </location>
</feature>
<feature type="chain" id="PRO_0000011910" description="Exochitinase 1">
    <location>
        <begin position="30"/>
        <end position="597"/>
    </location>
</feature>
<feature type="domain" description="Fibronectin type-III" evidence="2">
    <location>
        <begin position="172"/>
        <end position="253"/>
    </location>
</feature>
<feature type="domain" description="GH18" evidence="3">
    <location>
        <begin position="264"/>
        <end position="597"/>
    </location>
</feature>
<feature type="active site" description="Proton donor" evidence="3">
    <location>
        <position position="384"/>
    </location>
</feature>
<name>CHIX_STROI</name>
<accession>Q05638</accession>
<comment type="function">
    <text>Exochitinase that generates exclusively chitobiose from chitotetraose, chitohexaose, and colloidal high-molecular mass chitin.</text>
</comment>
<comment type="catalytic activity">
    <reaction>
        <text>Random endo-hydrolysis of N-acetyl-beta-D-glucosaminide (1-&gt;4)-beta-linkages in chitin and chitodextrins.</text>
        <dbReference type="EC" id="3.2.1.14"/>
    </reaction>
</comment>
<comment type="activity regulation">
    <text>Inhibited by the pseudosugar allosamidin A.</text>
</comment>
<comment type="biophysicochemical properties">
    <phDependence>
        <text>Optimum pH is 7.3.</text>
    </phDependence>
    <temperatureDependence>
        <text>Optimum temperature is 55 degrees Celsius.</text>
    </temperatureDependence>
</comment>
<comment type="induction">
    <text>By chitin.</text>
</comment>
<comment type="PTM">
    <text>The N-terminus is blocked.</text>
</comment>
<comment type="similarity">
    <text evidence="4">Belongs to the glycosyl hydrolase 18 family. Chitinase class II subfamily.</text>
</comment>
<keyword id="KW-0119">Carbohydrate metabolism</keyword>
<keyword id="KW-0146">Chitin degradation</keyword>
<keyword id="KW-0147">Chitin-binding</keyword>
<keyword id="KW-0326">Glycosidase</keyword>
<keyword id="KW-0378">Hydrolase</keyword>
<keyword id="KW-0624">Polysaccharide degradation</keyword>
<keyword id="KW-0732">Signal</keyword>
<organism>
    <name type="scientific">Streptomyces olivaceoviridis</name>
    <name type="common">Streptomyces corchorusii</name>
    <dbReference type="NCBI Taxonomy" id="1921"/>
    <lineage>
        <taxon>Bacteria</taxon>
        <taxon>Bacillati</taxon>
        <taxon>Actinomycetota</taxon>
        <taxon>Actinomycetes</taxon>
        <taxon>Kitasatosporales</taxon>
        <taxon>Streptomycetaceae</taxon>
        <taxon>Streptomyces</taxon>
    </lineage>
</organism>
<dbReference type="EC" id="3.2.1.14"/>
<dbReference type="EMBL" id="X71080">
    <property type="protein sequence ID" value="CAA50398.1"/>
    <property type="molecule type" value="Genomic_DNA"/>
</dbReference>
<dbReference type="PIR" id="S33848">
    <property type="entry name" value="S32039"/>
</dbReference>
<dbReference type="SMR" id="Q05638"/>
<dbReference type="CAZy" id="CBM16">
    <property type="family name" value="Carbohydrate-Binding Module Family 16"/>
</dbReference>
<dbReference type="CAZy" id="GH18">
    <property type="family name" value="Glycoside Hydrolase Family 18"/>
</dbReference>
<dbReference type="GO" id="GO:0008061">
    <property type="term" value="F:chitin binding"/>
    <property type="evidence" value="ECO:0007669"/>
    <property type="project" value="UniProtKB-KW"/>
</dbReference>
<dbReference type="GO" id="GO:0008843">
    <property type="term" value="F:endochitinase activity"/>
    <property type="evidence" value="ECO:0007669"/>
    <property type="project" value="UniProtKB-EC"/>
</dbReference>
<dbReference type="GO" id="GO:0006032">
    <property type="term" value="P:chitin catabolic process"/>
    <property type="evidence" value="ECO:0007669"/>
    <property type="project" value="UniProtKB-KW"/>
</dbReference>
<dbReference type="GO" id="GO:0000272">
    <property type="term" value="P:polysaccharide catabolic process"/>
    <property type="evidence" value="ECO:0007669"/>
    <property type="project" value="UniProtKB-KW"/>
</dbReference>
<dbReference type="CDD" id="cd00063">
    <property type="entry name" value="FN3"/>
    <property type="match status" value="1"/>
</dbReference>
<dbReference type="CDD" id="cd02871">
    <property type="entry name" value="GH18_chitinase_D-like"/>
    <property type="match status" value="1"/>
</dbReference>
<dbReference type="Gene3D" id="2.60.120.260">
    <property type="entry name" value="Galactose-binding domain-like"/>
    <property type="match status" value="1"/>
</dbReference>
<dbReference type="Gene3D" id="3.20.20.80">
    <property type="entry name" value="Glycosidases"/>
    <property type="match status" value="1"/>
</dbReference>
<dbReference type="Gene3D" id="2.60.40.10">
    <property type="entry name" value="Immunoglobulins"/>
    <property type="match status" value="1"/>
</dbReference>
<dbReference type="InterPro" id="IPR003305">
    <property type="entry name" value="CenC_carb-bd"/>
</dbReference>
<dbReference type="InterPro" id="IPR011583">
    <property type="entry name" value="Chitinase_II/V-like_cat"/>
</dbReference>
<dbReference type="InterPro" id="IPR003961">
    <property type="entry name" value="FN3_dom"/>
</dbReference>
<dbReference type="InterPro" id="IPR036116">
    <property type="entry name" value="FN3_sf"/>
</dbReference>
<dbReference type="InterPro" id="IPR008979">
    <property type="entry name" value="Galactose-bd-like_sf"/>
</dbReference>
<dbReference type="InterPro" id="IPR001223">
    <property type="entry name" value="Glyco_hydro18_cat"/>
</dbReference>
<dbReference type="InterPro" id="IPR001579">
    <property type="entry name" value="Glyco_hydro_18_chit_AS"/>
</dbReference>
<dbReference type="InterPro" id="IPR017853">
    <property type="entry name" value="Glycoside_hydrolase_SF"/>
</dbReference>
<dbReference type="InterPro" id="IPR050542">
    <property type="entry name" value="Glycosyl_Hydrlase18_Chitinase"/>
</dbReference>
<dbReference type="InterPro" id="IPR013783">
    <property type="entry name" value="Ig-like_fold"/>
</dbReference>
<dbReference type="PANTHER" id="PTHR45708">
    <property type="entry name" value="ENDOCHITINASE"/>
    <property type="match status" value="1"/>
</dbReference>
<dbReference type="PANTHER" id="PTHR45708:SF49">
    <property type="entry name" value="ENDOCHITINASE"/>
    <property type="match status" value="1"/>
</dbReference>
<dbReference type="Pfam" id="PF02018">
    <property type="entry name" value="CBM_4_9"/>
    <property type="match status" value="1"/>
</dbReference>
<dbReference type="Pfam" id="PF00041">
    <property type="entry name" value="fn3"/>
    <property type="match status" value="1"/>
</dbReference>
<dbReference type="Pfam" id="PF00704">
    <property type="entry name" value="Glyco_hydro_18"/>
    <property type="match status" value="1"/>
</dbReference>
<dbReference type="PRINTS" id="PR00014">
    <property type="entry name" value="FNTYPEIII"/>
</dbReference>
<dbReference type="SMART" id="SM00060">
    <property type="entry name" value="FN3"/>
    <property type="match status" value="1"/>
</dbReference>
<dbReference type="SMART" id="SM00636">
    <property type="entry name" value="Glyco_18"/>
    <property type="match status" value="1"/>
</dbReference>
<dbReference type="SUPFAM" id="SSF51445">
    <property type="entry name" value="(Trans)glycosidases"/>
    <property type="match status" value="1"/>
</dbReference>
<dbReference type="SUPFAM" id="SSF49265">
    <property type="entry name" value="Fibronectin type III"/>
    <property type="match status" value="1"/>
</dbReference>
<dbReference type="SUPFAM" id="SSF49785">
    <property type="entry name" value="Galactose-binding domain-like"/>
    <property type="match status" value="1"/>
</dbReference>
<dbReference type="PROSITE" id="PS50853">
    <property type="entry name" value="FN3"/>
    <property type="match status" value="1"/>
</dbReference>
<dbReference type="PROSITE" id="PS01095">
    <property type="entry name" value="GH18_1"/>
    <property type="match status" value="1"/>
</dbReference>
<dbReference type="PROSITE" id="PS51910">
    <property type="entry name" value="GH18_2"/>
    <property type="match status" value="1"/>
</dbReference>
<evidence type="ECO:0000255" key="1"/>
<evidence type="ECO:0000255" key="2">
    <source>
        <dbReference type="PROSITE-ProRule" id="PRU00316"/>
    </source>
</evidence>
<evidence type="ECO:0000255" key="3">
    <source>
        <dbReference type="PROSITE-ProRule" id="PRU01258"/>
    </source>
</evidence>
<evidence type="ECO:0000305" key="4"/>
<sequence length="597" mass="62314">MDRFRPLAVLIAAALTLSGTTALSSAARAADADLARNGGFEAGLDGWTCTAGTTVNSPVRSGSSALKATPAGSDNARCAQTVTVQPNSQYTLSGHVQGSYVYLGASGTGTTDVSTWTQSAPDWRQLTTTFRTGPSTTRVTLYTHGWYGTGAYHADDISLVGPGGGTEQPPAPPTGLRTGSVTATSVALSWSPVTGATGYAVYRDGVKVATASGTSATVTGLTPDTAYAFQVAAVNGAGESAKSATVTATTAPGTGGGSADLPPHALVGYLHASFANGSGYTRLADVPDSWDVIDLAFGEPTSVTSGDIRFDRCPATECPNVESDAEFKAAIKAKQAAGKKVLISIGGQNGQVQLTTTAARDTFVSSVSKIIDEYGLDGLDIDFEGHSLSLNADDTDFKNPKTPVIVNLIQALKTLKAKYGDDFVLTMAPETFFVQLGYQYYGTGKWGGQDPRAGAYLPVIHALRDDLTLLHVQDYNSGPIMGLDNQYHSMGGADFHIAMTDMLLTGFPVAGDAANVFPPLRADQVAIGMPATTNAGNGHVAPAEAVKTLDCLTRKTNCGSYATHGTWPALRALMTWSINWDRFGGWEFQRTFDGYFG</sequence>
<proteinExistence type="evidence at protein level"/>
<gene>
    <name type="primary">chi01</name>
</gene>
<reference key="1">
    <citation type="journal article" date="1993" name="Eur. J. Biochem.">
        <title>Characteristics of an exochitinase from Streptomyces olivaceoviridis, its corresponding gene, putative protein domains and relationship to other chitinases.</title>
        <authorList>
            <person name="Blaak H."/>
            <person name="Schnellmann J."/>
            <person name="Walter S."/>
            <person name="Henrissat B."/>
            <person name="Schrempf H."/>
        </authorList>
    </citation>
    <scope>NUCLEOTIDE SEQUENCE [GENOMIC DNA]</scope>
    <source>
        <strain>ATCC 11238 / DSM 41433 / NCIB 8592 / QM B814</strain>
    </source>
</reference>